<evidence type="ECO:0000250" key="1">
    <source>
        <dbReference type="UniProtKB" id="Q9WTK3"/>
    </source>
</evidence>
<evidence type="ECO:0000269" key="2">
    <source>
    </source>
</evidence>
<evidence type="ECO:0000269" key="3">
    <source>
    </source>
</evidence>
<evidence type="ECO:0000269" key="4">
    <source>
    </source>
</evidence>
<evidence type="ECO:0000269" key="5">
    <source>
    </source>
</evidence>
<evidence type="ECO:0000269" key="6">
    <source>
    </source>
</evidence>
<evidence type="ECO:0000269" key="7">
    <source>
    </source>
</evidence>
<evidence type="ECO:0000269" key="8">
    <source>
    </source>
</evidence>
<evidence type="ECO:0000303" key="9">
    <source>
    </source>
</evidence>
<evidence type="ECO:0000305" key="10"/>
<evidence type="ECO:0000305" key="11">
    <source>
    </source>
</evidence>
<evidence type="ECO:0000305" key="12">
    <source>
    </source>
</evidence>
<evidence type="ECO:0000312" key="13">
    <source>
        <dbReference type="HGNC" id="HGNC:4446"/>
    </source>
</evidence>
<evidence type="ECO:0007744" key="14">
    <source>
        <dbReference type="PDB" id="7W72"/>
    </source>
</evidence>
<evidence type="ECO:0007744" key="15">
    <source>
        <dbReference type="PDB" id="7WLD"/>
    </source>
</evidence>
<evidence type="ECO:0007744" key="16">
    <source>
        <dbReference type="PDB" id="8IMX"/>
    </source>
</evidence>
<evidence type="ECO:0007744" key="17">
    <source>
        <dbReference type="PDB" id="8IMY"/>
    </source>
</evidence>
<evidence type="ECO:0007829" key="18">
    <source>
        <dbReference type="PDB" id="7W72"/>
    </source>
</evidence>
<evidence type="ECO:0007829" key="19">
    <source>
        <dbReference type="PDB" id="7WLD"/>
    </source>
</evidence>
<evidence type="ECO:0007829" key="20">
    <source>
        <dbReference type="PDB" id="8IMX"/>
    </source>
</evidence>
<accession>O43292</accession>
<accession>Q9NSS0</accession>
<accession>Q9UQ31</accession>
<keyword id="KW-0002">3D-structure</keyword>
<keyword id="KW-0025">Alternative splicing</keyword>
<keyword id="KW-0903">Direct protein sequencing</keyword>
<keyword id="KW-0225">Disease variant</keyword>
<keyword id="KW-1015">Disulfide bond</keyword>
<keyword id="KW-0256">Endoplasmic reticulum</keyword>
<keyword id="KW-0325">Glycoprotein</keyword>
<keyword id="KW-0337">GPI-anchor biosynthesis</keyword>
<keyword id="KW-0472">Membrane</keyword>
<keyword id="KW-1267">Proteomics identification</keyword>
<keyword id="KW-1185">Reference proteome</keyword>
<keyword id="KW-0812">Transmembrane</keyword>
<keyword id="KW-1133">Transmembrane helix</keyword>
<feature type="initiator methionine" description="Removed" evidence="2">
    <location>
        <position position="1"/>
    </location>
</feature>
<feature type="chain" id="PRO_0000087554" description="GPI-anchor transamidase component GPAA1">
    <location>
        <begin position="2"/>
        <end position="621"/>
    </location>
</feature>
<feature type="topological domain" description="Cytoplasmic" evidence="11 12">
    <location>
        <begin position="2"/>
        <end position="19"/>
    </location>
</feature>
<feature type="transmembrane region" description="Helical" evidence="5 6 14 15">
    <location>
        <begin position="20"/>
        <end position="41"/>
    </location>
</feature>
<feature type="topological domain" description="Lumenal" evidence="11 12">
    <location>
        <begin position="42"/>
        <end position="370"/>
    </location>
</feature>
<feature type="transmembrane region" description="Helical" evidence="5 6 14 15">
    <location>
        <begin position="371"/>
        <end position="393"/>
    </location>
</feature>
<feature type="topological domain" description="Cytoplasmic" evidence="11 12">
    <location>
        <begin position="394"/>
        <end position="425"/>
    </location>
</feature>
<feature type="transmembrane region" description="Helical" evidence="5 6 14 15">
    <location>
        <begin position="426"/>
        <end position="450"/>
    </location>
</feature>
<feature type="topological domain" description="Lumenal" evidence="11 12">
    <location>
        <begin position="451"/>
        <end position="462"/>
    </location>
</feature>
<feature type="transmembrane region" description="Helical" evidence="5 6 14 15">
    <location>
        <begin position="463"/>
        <end position="483"/>
    </location>
</feature>
<feature type="topological domain" description="Cytoplasmic" evidence="11 12">
    <location>
        <begin position="484"/>
        <end position="495"/>
    </location>
</feature>
<feature type="transmembrane region" description="Helical" evidence="5 6 14 15">
    <location>
        <begin position="496"/>
        <end position="519"/>
    </location>
</feature>
<feature type="transmembrane region" description="Helical" evidence="5 6 14 15">
    <location>
        <begin position="520"/>
        <end position="536"/>
    </location>
</feature>
<feature type="topological domain" description="Cytoplasmic" evidence="11 12">
    <location>
        <begin position="537"/>
        <end position="540"/>
    </location>
</feature>
<feature type="transmembrane region" description="Helical" evidence="5 6 14 15">
    <location>
        <begin position="541"/>
        <end position="563"/>
    </location>
</feature>
<feature type="topological domain" description="Lumenal" evidence="11 12">
    <location>
        <begin position="564"/>
        <end position="597"/>
    </location>
</feature>
<feature type="transmembrane region" description="Helical" evidence="5 6 14 15">
    <location>
        <begin position="598"/>
        <end position="619"/>
    </location>
</feature>
<feature type="topological domain" description="Cytoplasmic" evidence="11 12">
    <location>
        <begin position="620"/>
        <end position="621"/>
    </location>
</feature>
<feature type="binding site" evidence="7 16">
    <location>
        <position position="49"/>
    </location>
    <ligand>
        <name>a 2-acyl-6-[6-phosphoethanolamine-alpha-D-mannosyl-(1-&gt;2)-6-phosphoethanolamine-alpha-D-mannosyl-(1-&gt;6)-2-phosphoethanolamine-alpha-D-mannosyl-(1-&gt;4)-alpha-D-glucosaminyl]-1-(1-radyl,2-acyl-sn-glycero-3-phospho)-1D-myo-inositol</name>
        <dbReference type="ChEBI" id="CHEBI:144080"/>
    </ligand>
</feature>
<feature type="binding site" evidence="7 16 17">
    <location>
        <position position="51"/>
    </location>
    <ligand>
        <name>a 2-acyl-6-[6-phosphoethanolamine-alpha-D-mannosyl-(1-&gt;2)-6-phosphoethanolamine-alpha-D-mannosyl-(1-&gt;6)-2-phosphoethanolamine-alpha-D-mannosyl-(1-&gt;4)-alpha-D-glucosaminyl]-1-(1-radyl,2-acyl-sn-glycero-3-phospho)-1D-myo-inositol</name>
        <dbReference type="ChEBI" id="CHEBI:144080"/>
    </ligand>
</feature>
<feature type="binding site" evidence="7 16">
    <location>
        <position position="354"/>
    </location>
    <ligand>
        <name>a 2-acyl-6-[6-phosphoethanolamine-alpha-D-mannosyl-(1-&gt;2)-6-phosphoethanolamine-alpha-D-mannosyl-(1-&gt;6)-2-phosphoethanolamine-alpha-D-mannosyl-(1-&gt;4)-alpha-D-glucosaminyl]-1-(1-radyl,2-acyl-sn-glycero-3-phospho)-1D-myo-inositol</name>
        <dbReference type="ChEBI" id="CHEBI:144080"/>
    </ligand>
</feature>
<feature type="binding site" evidence="7 16 17">
    <location>
        <position position="355"/>
    </location>
    <ligand>
        <name>a 2-acyl-6-[6-phosphoethanolamine-alpha-D-mannosyl-(1-&gt;2)-6-phosphoethanolamine-alpha-D-mannosyl-(1-&gt;6)-2-phosphoethanolamine-alpha-D-mannosyl-(1-&gt;4)-alpha-D-glucosaminyl]-1-(1-radyl,2-acyl-sn-glycero-3-phospho)-1D-myo-inositol</name>
        <dbReference type="ChEBI" id="CHEBI:144080"/>
    </ligand>
</feature>
<feature type="binding site" evidence="7 16 17">
    <location>
        <position position="355"/>
    </location>
    <ligand>
        <name>Mg(2+)</name>
        <dbReference type="ChEBI" id="CHEBI:18420"/>
    </ligand>
</feature>
<feature type="binding site" evidence="7 16">
    <location>
        <position position="356"/>
    </location>
    <ligand>
        <name>a 2-acyl-6-[6-phosphoethanolamine-alpha-D-mannosyl-(1-&gt;2)-6-phosphoethanolamine-alpha-D-mannosyl-(1-&gt;6)-2-phosphoethanolamine-alpha-D-mannosyl-(1-&gt;4)-alpha-D-glucosaminyl]-1-(1-radyl,2-acyl-sn-glycero-3-phospho)-1D-myo-inositol</name>
        <dbReference type="ChEBI" id="CHEBI:144080"/>
    </ligand>
</feature>
<feature type="glycosylation site" description="N-linked (GlcNAc...) asparagine" evidence="5 7 16 17">
    <location>
        <position position="203"/>
    </location>
</feature>
<feature type="disulfide bond" evidence="5 6 7 14 15 16 17">
    <location>
        <begin position="259"/>
        <end position="266"/>
    </location>
</feature>
<feature type="splice variant" id="VSP_009542" description="In isoform 2." evidence="9">
    <original>CVLSYVAGIAWFLALVFPPLTQRTYMSENAMGSTMVEEQFAGGDRARAFARDFAAHRKKSG</original>
    <variation>W</variation>
    <location>
        <begin position="25"/>
        <end position="85"/>
    </location>
</feature>
<feature type="sequence variant" id="VAR_080543" description="In GPIBD15; results in low amounts of GPI-anchored proteins on cell surface; dbSNP:rs1554763770." evidence="3">
    <original>S</original>
    <variation>L</variation>
    <location>
        <position position="51"/>
    </location>
</feature>
<feature type="sequence variant" id="VAR_080544" description="In GPIBD15; uncertain significance; requires 2 nucleotide substitutions; dbSNP:rs1554763777." evidence="3">
    <original>A</original>
    <variation>N</variation>
    <location>
        <position position="54"/>
    </location>
</feature>
<feature type="sequence variant" id="VAR_080545" description="In GPIBD15; results in low amounts of GPI-anchored proteins on cell surface; dbSNP:rs782220208." evidence="3">
    <original>W</original>
    <variation>S</variation>
    <location>
        <position position="176"/>
    </location>
</feature>
<feature type="sequence variant" id="VAR_080546" description="In GPIBD15; dbSNP:rs1554764058." evidence="3">
    <original>L</original>
    <variation>P</variation>
    <location>
        <position position="290"/>
    </location>
</feature>
<feature type="sequence variant" id="VAR_080547" description="In GPIBD15; results in low amounts of GPI-anchored proteins on cell surface; dbSNP:rs1010907740." evidence="3">
    <original>L</original>
    <variation>P</variation>
    <location>
        <position position="291"/>
    </location>
</feature>
<feature type="sequence variant" id="VAR_080548" description="In GPIBD15; dbSNP:rs782768127." evidence="3">
    <original>A</original>
    <variation>P</variation>
    <location>
        <position position="389"/>
    </location>
</feature>
<feature type="mutagenesis site" description="No effect on function in GPI-anchor attachment to protein." evidence="4">
    <original>E</original>
    <variation>A</variation>
    <location>
        <position position="52"/>
    </location>
</feature>
<feature type="mutagenesis site" description="No effect on function in GPI-anchor attachment to protein." evidence="4">
    <original>R</original>
    <variation>A</variation>
    <location>
        <position position="137"/>
    </location>
</feature>
<feature type="mutagenesis site" description="No effect on function in GPI-anchor attachment to protein." evidence="4">
    <original>D</original>
    <variation>A</variation>
    <location>
        <position position="153"/>
    </location>
</feature>
<feature type="mutagenesis site" description="No effect on function in GPI-anchor attachment to protein." evidence="4">
    <original>EH</original>
    <variation>AA</variation>
    <location>
        <begin position="186"/>
        <end position="187"/>
    </location>
</feature>
<feature type="mutagenesis site" description="No effect on function in GPI-anchor attachment to protein." evidence="4">
    <original>D</original>
    <variation>A</variation>
    <location>
        <position position="188"/>
    </location>
</feature>
<feature type="mutagenesis site" description="No effect on function in GPI-anchor attachment to protein." evidence="4">
    <original>N</original>
    <variation>Q</variation>
    <location>
        <position position="203"/>
    </location>
</feature>
<feature type="mutagenesis site" description="No effect on function in GPI-anchor attachment to protein." evidence="4">
    <original>E</original>
    <variation>A</variation>
    <location>
        <position position="226"/>
    </location>
</feature>
<feature type="mutagenesis site" description="Decreased function in GPI-anchor attachment to protein." evidence="4">
    <original>D</original>
    <variation>A</variation>
    <location>
        <position position="250"/>
    </location>
</feature>
<feature type="mutagenesis site" description="No effect on function in GPI-anchor attachment to protein." evidence="4">
    <original>F</original>
    <variation>A</variation>
    <location>
        <position position="325"/>
    </location>
</feature>
<feature type="mutagenesis site" description="No effect on function in GPI-anchor attachment to protein." evidence="4">
    <original>Y</original>
    <variation>A</variation>
    <location>
        <position position="328"/>
    </location>
</feature>
<feature type="mutagenesis site" description="No effect on function in GPI-anchor attachment to protein." evidence="4">
    <original>K</original>
    <variation>A</variation>
    <location>
        <position position="329"/>
    </location>
</feature>
<feature type="mutagenesis site" description="No effect on function in GPI-anchor attachment to protein." evidence="4">
    <original>ER</original>
    <variation>AA</variation>
    <location>
        <begin position="351"/>
        <end position="352"/>
    </location>
</feature>
<feature type="mutagenesis site" description="Reduces GPI-anchor transamidase activity by ~25%." evidence="6">
    <original>H</original>
    <variation>F</variation>
    <location>
        <position position="354"/>
    </location>
</feature>
<feature type="mutagenesis site" description="No effect on function in GPI-anchor attachment to protein." evidence="4">
    <original>N</original>
    <variation>Q</variation>
    <location>
        <position position="517"/>
    </location>
</feature>
<feature type="helix" evidence="19">
    <location>
        <begin position="10"/>
        <end position="37"/>
    </location>
</feature>
<feature type="turn" evidence="19">
    <location>
        <begin position="38"/>
        <end position="40"/>
    </location>
</feature>
<feature type="turn" evidence="19">
    <location>
        <begin position="42"/>
        <end position="44"/>
    </location>
</feature>
<feature type="helix" evidence="19">
    <location>
        <begin position="53"/>
        <end position="56"/>
    </location>
</feature>
<feature type="helix" evidence="19">
    <location>
        <begin position="67"/>
        <end position="84"/>
    </location>
</feature>
<feature type="helix" evidence="19">
    <location>
        <begin position="89"/>
        <end position="99"/>
    </location>
</feature>
<feature type="strand" evidence="19">
    <location>
        <begin position="102"/>
        <end position="116"/>
    </location>
</feature>
<feature type="turn" evidence="19">
    <location>
        <begin position="117"/>
        <end position="120"/>
    </location>
</feature>
<feature type="strand" evidence="19">
    <location>
        <begin position="121"/>
        <end position="133"/>
    </location>
</feature>
<feature type="strand" evidence="18">
    <location>
        <begin position="136"/>
        <end position="138"/>
    </location>
</feature>
<feature type="strand" evidence="19">
    <location>
        <begin position="142"/>
        <end position="149"/>
    </location>
</feature>
<feature type="strand" evidence="19">
    <location>
        <begin position="152"/>
        <end position="154"/>
    </location>
</feature>
<feature type="helix" evidence="19">
    <location>
        <begin position="157"/>
        <end position="170"/>
    </location>
</feature>
<feature type="strand" evidence="19">
    <location>
        <begin position="178"/>
        <end position="187"/>
    </location>
</feature>
<feature type="helix" evidence="19">
    <location>
        <begin position="190"/>
        <end position="200"/>
    </location>
</feature>
<feature type="strand" evidence="19">
    <location>
        <begin position="217"/>
        <end position="226"/>
    </location>
</feature>
<feature type="strand" evidence="19">
    <location>
        <begin position="229"/>
        <end position="238"/>
    </location>
</feature>
<feature type="helix" evidence="19">
    <location>
        <begin position="242"/>
        <end position="244"/>
    </location>
</feature>
<feature type="helix" evidence="19">
    <location>
        <begin position="249"/>
        <end position="261"/>
    </location>
</feature>
<feature type="strand" evidence="19">
    <location>
        <begin position="266"/>
        <end position="268"/>
    </location>
</feature>
<feature type="turn" evidence="20">
    <location>
        <begin position="279"/>
        <end position="281"/>
    </location>
</feature>
<feature type="helix" evidence="19">
    <location>
        <begin position="282"/>
        <end position="299"/>
    </location>
</feature>
<feature type="helix" evidence="19">
    <location>
        <begin position="305"/>
        <end position="309"/>
    </location>
</feature>
<feature type="helix" evidence="19">
    <location>
        <begin position="310"/>
        <end position="312"/>
    </location>
</feature>
<feature type="strand" evidence="19">
    <location>
        <begin position="315"/>
        <end position="322"/>
    </location>
</feature>
<feature type="helix" evidence="19">
    <location>
        <begin position="332"/>
        <end position="347"/>
    </location>
</feature>
<feature type="strand" evidence="19">
    <location>
        <begin position="358"/>
        <end position="364"/>
    </location>
</feature>
<feature type="strand" evidence="19">
    <location>
        <begin position="367"/>
        <end position="370"/>
    </location>
</feature>
<feature type="helix" evidence="19">
    <location>
        <begin position="371"/>
        <end position="374"/>
    </location>
</feature>
<feature type="helix" evidence="19">
    <location>
        <begin position="376"/>
        <end position="397"/>
    </location>
</feature>
<feature type="helix" evidence="18">
    <location>
        <begin position="425"/>
        <end position="427"/>
    </location>
</feature>
<feature type="helix" evidence="19">
    <location>
        <begin position="428"/>
        <end position="443"/>
    </location>
</feature>
<feature type="turn" evidence="19">
    <location>
        <begin position="444"/>
        <end position="446"/>
    </location>
</feature>
<feature type="strand" evidence="19">
    <location>
        <begin position="447"/>
        <end position="449"/>
    </location>
</feature>
<feature type="helix" evidence="19">
    <location>
        <begin position="450"/>
        <end position="455"/>
    </location>
</feature>
<feature type="helix" evidence="19">
    <location>
        <begin position="460"/>
        <end position="476"/>
    </location>
</feature>
<feature type="helix" evidence="19">
    <location>
        <begin position="480"/>
        <end position="482"/>
    </location>
</feature>
<feature type="strand" evidence="18">
    <location>
        <begin position="488"/>
        <end position="490"/>
    </location>
</feature>
<feature type="helix" evidence="19">
    <location>
        <begin position="492"/>
        <end position="516"/>
    </location>
</feature>
<feature type="helix" evidence="19">
    <location>
        <begin position="518"/>
        <end position="532"/>
    </location>
</feature>
<feature type="strand" evidence="19">
    <location>
        <begin position="537"/>
        <end position="539"/>
    </location>
</feature>
<feature type="helix" evidence="19">
    <location>
        <begin position="541"/>
        <end position="549"/>
    </location>
</feature>
<feature type="helix" evidence="19">
    <location>
        <begin position="553"/>
        <end position="567"/>
    </location>
</feature>
<feature type="helix" evidence="19">
    <location>
        <begin position="574"/>
        <end position="595"/>
    </location>
</feature>
<feature type="helix" evidence="19">
    <location>
        <begin position="599"/>
        <end position="618"/>
    </location>
</feature>
<gene>
    <name evidence="13" type="primary">GPAA1</name>
    <name type="synonym">GAA1</name>
</gene>
<sequence>MGLLSDPVRRRALARLVLRLNAPLCVLSYVAGIAWFLALVFPPLTQRTYMSENAMGSTMVEEQFAGGDRARAFARDFAAHRKKSGALPVAWLERTMRSVGLEVYTQSFSRKLPFPDETHERYMVSGTNVYGILRAPRAASTESLVLTVPCGSDSTNSQAVGLLLALAAHFRGQIYWAKDIVFLVTEHDLLGTEAWLEAYHDVNVTGMQSSPLQGRAGAIQAAVALELSSDVVTSLDVAVEGLNGQLPNLDLLNLFQTFCQKGGLLCTLQGKLQPEDWTSLDGPLQGLQTLLLMVLRQASGRPHGSHGLFLRYRVEALTLRGINSFRQYKYDLVAVGKALEGMFRKLNHLLERLHQSFFLYLLPGLSRFVSIGLYMPAVGFLLLVLGLKALELWMQLHEAGMGLEEPGGAPGPSVPLPPSQGVGLASLVAPLLISQAMGLALYVLPVLGQHVATQHFPVAEAEAVVLTLLAIYAAGLALPHNTHRVVSTQAPDRGWMALKLVALIYLALQLGCIALTNFSLGFLLATTMVPTAALAKPHGPRTLYAALLVLTSPAATLLGSLFLWRELQEAPLSLAEGWQLFLAALAQGVLEHHTYGALLFPLLSLGLYPCWLLFWNVLFWK</sequence>
<reference key="1">
    <citation type="journal article" date="1998" name="FEBS Lett.">
        <title>Molecular cloning of human homolog of yeast GAA1 which is required for attachment of glycosylphosphatidylinositols to proteins.</title>
        <authorList>
            <person name="Hiroi Y."/>
            <person name="Komuro I."/>
            <person name="Chen R."/>
            <person name="Hosoda T."/>
            <person name="Mizuno T."/>
            <person name="Kudoh S."/>
            <person name="Georgescu S.P."/>
            <person name="Medof M.E."/>
            <person name="Yazaki Y."/>
        </authorList>
    </citation>
    <scope>NUCLEOTIDE SEQUENCE [MRNA] (ISOFORM 1)</scope>
    <scope>FUNCTION</scope>
    <scope>PATHWAY</scope>
    <scope>TISSUE SPECIFICITY</scope>
    <source>
        <tissue>Heart</tissue>
    </source>
</reference>
<reference key="2">
    <citation type="journal article" date="1999" name="Cytogenet. Cell Genet.">
        <title>Human and mouse GPAA1 (glycosylphosphatidylinositol anchor attachment 1) genes: genomic structures, chromosome loci and the presence of a minor class intron.</title>
        <authorList>
            <person name="Inoue N."/>
            <person name="Ohishi K."/>
            <person name="Endo Y."/>
            <person name="Fujita T."/>
            <person name="Takeda J."/>
            <person name="Kinoshita T."/>
        </authorList>
    </citation>
    <scope>NUCLEOTIDE SEQUENCE [GENOMIC DNA / MRNA] (ISOFORM 1)</scope>
    <source>
        <tissue>Lung</tissue>
    </source>
</reference>
<reference key="3">
    <citation type="journal article" date="2007" name="BMC Genomics">
        <title>The full-ORF clone resource of the German cDNA consortium.</title>
        <authorList>
            <person name="Bechtel S."/>
            <person name="Rosenfelder H."/>
            <person name="Duda A."/>
            <person name="Schmidt C.P."/>
            <person name="Ernst U."/>
            <person name="Wellenreuther R."/>
            <person name="Mehrle A."/>
            <person name="Schuster C."/>
            <person name="Bahr A."/>
            <person name="Bloecker H."/>
            <person name="Heubner D."/>
            <person name="Hoerlein A."/>
            <person name="Michel G."/>
            <person name="Wedler H."/>
            <person name="Koehrer K."/>
            <person name="Ottenwaelder B."/>
            <person name="Poustka A."/>
            <person name="Wiemann S."/>
            <person name="Schupp I."/>
        </authorList>
    </citation>
    <scope>NUCLEOTIDE SEQUENCE [LARGE SCALE MRNA] (ISOFORM 1)</scope>
    <source>
        <tissue>Testis</tissue>
    </source>
</reference>
<reference key="4">
    <citation type="journal article" date="2004" name="Genome Res.">
        <title>The status, quality, and expansion of the NIH full-length cDNA project: the Mammalian Gene Collection (MGC).</title>
        <authorList>
            <consortium name="The MGC Project Team"/>
        </authorList>
    </citation>
    <scope>NUCLEOTIDE SEQUENCE [LARGE SCALE MRNA] (ISOFORMS 1 AND 2)</scope>
    <source>
        <tissue>Muscle</tissue>
        <tissue>Placenta</tissue>
        <tissue>Skin</tissue>
    </source>
</reference>
<reference key="5">
    <citation type="journal article" date="2001" name="EMBO J.">
        <title>PIG-S and PIG-T, essential for GPI anchor attachment to proteins, form a complex with GAA1 and GPI8.</title>
        <authorList>
            <person name="Ohishi K."/>
            <person name="Inoue N."/>
            <person name="Kinoshita T."/>
        </authorList>
    </citation>
    <scope>PROTEIN SEQUENCE OF 2-21</scope>
    <scope>FUNCTION</scope>
    <scope>PATHWAY</scope>
    <scope>SUBUNIT</scope>
</reference>
<reference key="6">
    <citation type="journal article" date="2011" name="BMC Syst. Biol.">
        <title>Initial characterization of the human central proteome.</title>
        <authorList>
            <person name="Burkard T.R."/>
            <person name="Planyavsky M."/>
            <person name="Kaupe I."/>
            <person name="Breitwieser F.P."/>
            <person name="Buerckstuemmer T."/>
            <person name="Bennett K.L."/>
            <person name="Superti-Furga G."/>
            <person name="Colinge J."/>
        </authorList>
    </citation>
    <scope>IDENTIFICATION BY MASS SPECTROMETRY [LARGE SCALE ANALYSIS]</scope>
</reference>
<reference key="7">
    <citation type="journal article" date="2017" name="Am. J. Hum. Genet.">
        <title>Mutations in GPAA1, encoding a GPI transamidase complex protein, cause developmental delay, epilepsy, cerebellar atrophy, and osteopenia.</title>
        <authorList>
            <person name="Nguyen T.T.M."/>
            <person name="Murakami Y."/>
            <person name="Sheridan E."/>
            <person name="Ehresmann S."/>
            <person name="Rousseau J."/>
            <person name="St-Denis A."/>
            <person name="Chai G."/>
            <person name="Ajeawung N.F."/>
            <person name="Fairbrother L."/>
            <person name="Reimschisel T."/>
            <person name="Bateman A."/>
            <person name="Berry-Kravis E."/>
            <person name="Xia F."/>
            <person name="Tardif J."/>
            <person name="Parry D.A."/>
            <person name="Logan C.V."/>
            <person name="Diggle C."/>
            <person name="Bennett C.P."/>
            <person name="Hattingh L."/>
            <person name="Rosenfeld J.A."/>
            <person name="Perry M.S."/>
            <person name="Parker M.J."/>
            <person name="Le Deist F."/>
            <person name="Zaki M.S."/>
            <person name="Ignatius E."/>
            <person name="Isohanni P."/>
            <person name="Loennqvist T."/>
            <person name="Carroll C.J."/>
            <person name="Johnson C.A."/>
            <person name="Gleeson J.G."/>
            <person name="Kinoshita T."/>
            <person name="Campeau P.M."/>
        </authorList>
    </citation>
    <scope>FUNCTION</scope>
    <scope>PATHWAY</scope>
    <scope>INVOLVEMENT IN GPIBD15</scope>
    <scope>VARIANTS GPIBD15 LEU-51; ASN-54; SER-176; PRO-290; PRO-291 AND PRO-389</scope>
    <scope>CHARACTERIZATION OF VARIANTS GPIBD15 LEU-51; SER-176 AND PRO-291</scope>
</reference>
<reference key="8">
    <citation type="journal article" date="2021" name="Molecules">
        <title>Functional analysis of the GPI transamidase complex by screening for amino acid mutations in each subunit.</title>
        <authorList>
            <person name="Liu S.S."/>
            <person name="Jin F."/>
            <person name="Liu Y.S."/>
            <person name="Murakami Y."/>
            <person name="Sugita Y."/>
            <person name="Kato T."/>
            <person name="Gao X.D."/>
            <person name="Kinoshita T."/>
            <person name="Hattori M."/>
            <person name="Fujita M."/>
        </authorList>
    </citation>
    <scope>MUTAGENESIS OF GLU-52; ARG-137; ASP-153; 186-GLU-HIS-187; ASP-188; ASN-203; GLU-226; ASP-250; PHE-325; TYR-328; LYS-329; 351-GLU-ARG-352 AND ASN-517</scope>
    <scope>FUNCTION</scope>
    <scope>PATHWAY</scope>
    <scope>IDENTIFICATION OF THE GPI-ANCHOR TRANSAMIDASE COMPLEX</scope>
</reference>
<reference evidence="15" key="9">
    <citation type="journal article" date="2022" name="Nat. Commun.">
        <title>Molecular insights into biogenesis of glycosylphosphatidylinositol anchor proteins.</title>
        <authorList>
            <person name="Xu Y."/>
            <person name="Jia G."/>
            <person name="Li T."/>
            <person name="Zhou Z."/>
            <person name="Luo Y."/>
            <person name="Chao Y."/>
            <person name="Bao J."/>
            <person name="Su Z."/>
            <person name="Qu Q."/>
            <person name="Li D."/>
        </authorList>
    </citation>
    <scope>STRUCTURE BY ELECTRON MICROSCOPY (2.53 ANGSTROMS) OF 2-621 IN COMPLEX WITH PIGT; PIGU; PIGS AND PIGK</scope>
    <scope>FUNCTION</scope>
    <scope>PATHWAY</scope>
    <scope>IDENTIFICATION OF THE GPI-ANCHOR TRANSAMIDASE COMPLEX</scope>
    <scope>DISULFIDE BONDS</scope>
    <scope>MUTAGENESIS OF HIS-354</scope>
</reference>
<reference evidence="14" key="10">
    <citation type="journal article" date="2022" name="Nat. Struct. Mol. Biol.">
        <title>Structure of human glycosylphosphatidylinositol transamidase.</title>
        <authorList>
            <person name="Zhang H."/>
            <person name="Su J."/>
            <person name="Li B."/>
            <person name="Gao Y."/>
            <person name="Liu M."/>
            <person name="He L."/>
            <person name="Xu H."/>
            <person name="Dong Y."/>
            <person name="Zhang X.C."/>
            <person name="Zhao Y."/>
        </authorList>
    </citation>
    <scope>STRUCTURE BY ELECTRON MICROSCOPY (3.10 ANGSTROMS)IN COMPLEX WITH PIGT; PIGU; PIGS AND PIGK</scope>
    <scope>FUNCTION</scope>
    <scope>PATHWAY</scope>
    <scope>IDENTIFICATION OF THE GPI-ANCHOR TRANSAMIDASE COMPLEX</scope>
    <scope>DISULFIDE BONDS</scope>
    <scope>GLYCOSYLATION AT ASN-203</scope>
</reference>
<reference evidence="16 17" key="11">
    <citation type="journal article" date="2023" name="Nat. Commun.">
        <title>Structures of liganded glycosylphosphatidylinositol transamidase illuminate GPI-AP biogenesis.</title>
        <authorList>
            <person name="Xu Y."/>
            <person name="Li T."/>
            <person name="Zhou Z."/>
            <person name="Hong J."/>
            <person name="Chao Y."/>
            <person name="Zhu Z."/>
            <person name="Zhang Y."/>
            <person name="Qu Q."/>
            <person name="Li D."/>
        </authorList>
    </citation>
    <scope>STRUCTURE BY ELECTRON MICROSCOPY (2.85 ANGSTROMS) OF 2-621 IN COMPLEX WITH GPI-ANCHOR; MAGNESIUM ION; ULBP2; PIGT; PIGU; PIGS AND PIGK</scope>
    <scope>FUNCTION</scope>
    <scope>PATHWAY</scope>
    <scope>IDENTIFICATION OF THE GPI-ANCHOR TRANSAMIDASE COMPLEX</scope>
    <scope>DISULFIDE BONDS</scope>
    <scope>GLYCOSYLATION AT ASN-203</scope>
</reference>
<dbReference type="EMBL" id="AB006969">
    <property type="protein sequence ID" value="BAA24035.1"/>
    <property type="molecule type" value="mRNA"/>
</dbReference>
<dbReference type="EMBL" id="AB002135">
    <property type="protein sequence ID" value="BAA82588.1"/>
    <property type="molecule type" value="mRNA"/>
</dbReference>
<dbReference type="EMBL" id="AB002137">
    <property type="protein sequence ID" value="BAA82590.1"/>
    <property type="molecule type" value="Genomic_DNA"/>
</dbReference>
<dbReference type="EMBL" id="AB017267">
    <property type="protein sequence ID" value="BAA82587.1"/>
    <property type="molecule type" value="Genomic_DNA"/>
</dbReference>
<dbReference type="EMBL" id="AL157437">
    <property type="protein sequence ID" value="CAB75660.2"/>
    <property type="status" value="ALT_SEQ"/>
    <property type="molecule type" value="mRNA"/>
</dbReference>
<dbReference type="EMBL" id="BC003171">
    <property type="protein sequence ID" value="AAH03171.1"/>
    <property type="molecule type" value="mRNA"/>
</dbReference>
<dbReference type="EMBL" id="BC004129">
    <property type="protein sequence ID" value="AAH04129.1"/>
    <property type="molecule type" value="mRNA"/>
</dbReference>
<dbReference type="EMBL" id="BC006383">
    <property type="protein sequence ID" value="AAH06383.2"/>
    <property type="molecule type" value="mRNA"/>
</dbReference>
<dbReference type="CCDS" id="CCDS43776.1">
    <molecule id="O43292-1"/>
</dbReference>
<dbReference type="PIR" id="T46923">
    <property type="entry name" value="T46923"/>
</dbReference>
<dbReference type="RefSeq" id="NP_003792.1">
    <molecule id="O43292-1"/>
    <property type="nucleotide sequence ID" value="NM_003801.4"/>
</dbReference>
<dbReference type="PDB" id="7W72">
    <property type="method" value="EM"/>
    <property type="resolution" value="3.10 A"/>
    <property type="chains" value="A=1-621"/>
</dbReference>
<dbReference type="PDB" id="7WLD">
    <property type="method" value="EM"/>
    <property type="resolution" value="2.53 A"/>
    <property type="chains" value="G=2-621"/>
</dbReference>
<dbReference type="PDB" id="8IMX">
    <property type="method" value="EM"/>
    <property type="resolution" value="2.85 A"/>
    <property type="chains" value="G=2-621"/>
</dbReference>
<dbReference type="PDB" id="8IMY">
    <property type="method" value="EM"/>
    <property type="resolution" value="3.22 A"/>
    <property type="chains" value="G=2-621"/>
</dbReference>
<dbReference type="PDBsum" id="7W72"/>
<dbReference type="PDBsum" id="7WLD"/>
<dbReference type="PDBsum" id="8IMX"/>
<dbReference type="PDBsum" id="8IMY"/>
<dbReference type="EMDB" id="EMD-32336"/>
<dbReference type="EMDB" id="EMD-32582"/>
<dbReference type="SMR" id="O43292"/>
<dbReference type="BioGRID" id="114271">
    <property type="interactions" value="124"/>
</dbReference>
<dbReference type="ComplexPortal" id="CPX-6503">
    <property type="entry name" value="GPI-anchor transamidase complex"/>
</dbReference>
<dbReference type="CORUM" id="O43292"/>
<dbReference type="FunCoup" id="O43292">
    <property type="interactions" value="2512"/>
</dbReference>
<dbReference type="IntAct" id="O43292">
    <property type="interactions" value="77"/>
</dbReference>
<dbReference type="MINT" id="O43292"/>
<dbReference type="STRING" id="9606.ENSP00000347206"/>
<dbReference type="GlyCosmos" id="O43292">
    <property type="glycosylation" value="2 sites, No reported glycans"/>
</dbReference>
<dbReference type="GlyGen" id="O43292">
    <property type="glycosylation" value="2 sites"/>
</dbReference>
<dbReference type="iPTMnet" id="O43292"/>
<dbReference type="PhosphoSitePlus" id="O43292"/>
<dbReference type="SwissPalm" id="O43292"/>
<dbReference type="BioMuta" id="GPAA1"/>
<dbReference type="jPOST" id="O43292"/>
<dbReference type="MassIVE" id="O43292"/>
<dbReference type="PaxDb" id="9606-ENSP00000347206"/>
<dbReference type="PeptideAtlas" id="O43292"/>
<dbReference type="ProteomicsDB" id="48861">
    <molecule id="O43292-1"/>
</dbReference>
<dbReference type="ProteomicsDB" id="48862">
    <molecule id="O43292-2"/>
</dbReference>
<dbReference type="Pumba" id="O43292"/>
<dbReference type="Antibodypedia" id="28266">
    <property type="antibodies" value="156 antibodies from 24 providers"/>
</dbReference>
<dbReference type="DNASU" id="8733"/>
<dbReference type="Ensembl" id="ENST00000355091.9">
    <molecule id="O43292-1"/>
    <property type="protein sequence ID" value="ENSP00000347206.4"/>
    <property type="gene ID" value="ENSG00000197858.12"/>
</dbReference>
<dbReference type="Ensembl" id="ENST00000361036.11">
    <molecule id="O43292-2"/>
    <property type="protein sequence ID" value="ENSP00000354316.6"/>
    <property type="gene ID" value="ENSG00000197858.12"/>
</dbReference>
<dbReference type="GeneID" id="8733"/>
<dbReference type="KEGG" id="hsa:8733"/>
<dbReference type="MANE-Select" id="ENST00000355091.9">
    <property type="protein sequence ID" value="ENSP00000347206.4"/>
    <property type="RefSeq nucleotide sequence ID" value="NM_003801.4"/>
    <property type="RefSeq protein sequence ID" value="NP_003792.1"/>
</dbReference>
<dbReference type="UCSC" id="uc003zax.4">
    <molecule id="O43292-1"/>
    <property type="organism name" value="human"/>
</dbReference>
<dbReference type="AGR" id="HGNC:4446"/>
<dbReference type="CTD" id="8733"/>
<dbReference type="DisGeNET" id="8733"/>
<dbReference type="GeneCards" id="GPAA1"/>
<dbReference type="HGNC" id="HGNC:4446">
    <property type="gene designation" value="GPAA1"/>
</dbReference>
<dbReference type="HPA" id="ENSG00000197858">
    <property type="expression patterns" value="Low tissue specificity"/>
</dbReference>
<dbReference type="MalaCards" id="GPAA1"/>
<dbReference type="MIM" id="603048">
    <property type="type" value="gene"/>
</dbReference>
<dbReference type="MIM" id="617810">
    <property type="type" value="phenotype"/>
</dbReference>
<dbReference type="neXtProt" id="NX_O43292"/>
<dbReference type="OpenTargets" id="ENSG00000197858"/>
<dbReference type="Orphanet" id="529665">
    <property type="disease" value="Neurodevelopmental delay-seizures-ophthalmic anomalies-osteopenia-cerebellar atrophy syndrome"/>
</dbReference>
<dbReference type="PharmGKB" id="PA28827"/>
<dbReference type="VEuPathDB" id="HostDB:ENSG00000197858"/>
<dbReference type="eggNOG" id="KOG3566">
    <property type="taxonomic scope" value="Eukaryota"/>
</dbReference>
<dbReference type="GeneTree" id="ENSGT00390000013685"/>
<dbReference type="HOGENOM" id="CLU_007442_2_1_1"/>
<dbReference type="InParanoid" id="O43292"/>
<dbReference type="OMA" id="MAIALWM"/>
<dbReference type="OrthoDB" id="445301at2759"/>
<dbReference type="PAN-GO" id="O43292">
    <property type="GO annotations" value="2 GO annotations based on evolutionary models"/>
</dbReference>
<dbReference type="PhylomeDB" id="O43292"/>
<dbReference type="TreeFam" id="TF313030"/>
<dbReference type="PathwayCommons" id="O43292"/>
<dbReference type="Reactome" id="R-HSA-162791">
    <property type="pathway name" value="Attachment of GPI anchor to uPAR"/>
</dbReference>
<dbReference type="SignaLink" id="O43292"/>
<dbReference type="SIGNOR" id="O43292"/>
<dbReference type="UniPathway" id="UPA00196"/>
<dbReference type="BioGRID-ORCS" id="8733">
    <property type="hits" value="32 hits in 1160 CRISPR screens"/>
</dbReference>
<dbReference type="ChiTaRS" id="GPAA1">
    <property type="organism name" value="human"/>
</dbReference>
<dbReference type="GeneWiki" id="GPAA1"/>
<dbReference type="GenomeRNAi" id="8733"/>
<dbReference type="Pharos" id="O43292">
    <property type="development level" value="Tbio"/>
</dbReference>
<dbReference type="PRO" id="PR:O43292"/>
<dbReference type="Proteomes" id="UP000005640">
    <property type="component" value="Chromosome 8"/>
</dbReference>
<dbReference type="RNAct" id="O43292">
    <property type="molecule type" value="protein"/>
</dbReference>
<dbReference type="Bgee" id="ENSG00000197858">
    <property type="expression patterns" value="Expressed in stromal cell of endometrium and 205 other cell types or tissues"/>
</dbReference>
<dbReference type="ExpressionAtlas" id="O43292">
    <property type="expression patterns" value="baseline and differential"/>
</dbReference>
<dbReference type="GO" id="GO:0005813">
    <property type="term" value="C:centrosome"/>
    <property type="evidence" value="ECO:0000314"/>
    <property type="project" value="HPA"/>
</dbReference>
<dbReference type="GO" id="GO:0005829">
    <property type="term" value="C:cytosol"/>
    <property type="evidence" value="ECO:0000314"/>
    <property type="project" value="HPA"/>
</dbReference>
<dbReference type="GO" id="GO:0005783">
    <property type="term" value="C:endoplasmic reticulum"/>
    <property type="evidence" value="ECO:0000314"/>
    <property type="project" value="HPA"/>
</dbReference>
<dbReference type="GO" id="GO:0005789">
    <property type="term" value="C:endoplasmic reticulum membrane"/>
    <property type="evidence" value="ECO:0000304"/>
    <property type="project" value="Reactome"/>
</dbReference>
<dbReference type="GO" id="GO:0042765">
    <property type="term" value="C:GPI-anchor transamidase complex"/>
    <property type="evidence" value="ECO:0000314"/>
    <property type="project" value="UniProtKB"/>
</dbReference>
<dbReference type="GO" id="GO:0016020">
    <property type="term" value="C:membrane"/>
    <property type="evidence" value="ECO:0007005"/>
    <property type="project" value="UniProtKB"/>
</dbReference>
<dbReference type="GO" id="GO:0005739">
    <property type="term" value="C:mitochondrion"/>
    <property type="evidence" value="ECO:0000314"/>
    <property type="project" value="HPA"/>
</dbReference>
<dbReference type="GO" id="GO:0034235">
    <property type="term" value="F:GPI anchor binding"/>
    <property type="evidence" value="ECO:0000314"/>
    <property type="project" value="UniProtKB"/>
</dbReference>
<dbReference type="GO" id="GO:0016255">
    <property type="term" value="P:attachment of GPI anchor to protein"/>
    <property type="evidence" value="ECO:0000314"/>
    <property type="project" value="UniProtKB"/>
</dbReference>
<dbReference type="GO" id="GO:0006506">
    <property type="term" value="P:GPI anchor biosynthetic process"/>
    <property type="evidence" value="ECO:0007669"/>
    <property type="project" value="UniProtKB-UniPathway"/>
</dbReference>
<dbReference type="GO" id="GO:0180046">
    <property type="term" value="P:GPI anchored protein biosynthesis"/>
    <property type="evidence" value="ECO:0000314"/>
    <property type="project" value="UniProtKB"/>
</dbReference>
<dbReference type="GO" id="GO:0006621">
    <property type="term" value="P:protein retention in ER lumen"/>
    <property type="evidence" value="ECO:0000303"/>
    <property type="project" value="UniProtKB"/>
</dbReference>
<dbReference type="FunFam" id="3.40.630.10:FF:000047">
    <property type="entry name" value="Glycosylphosphatidylinositol anchor attachment 1 protein"/>
    <property type="match status" value="1"/>
</dbReference>
<dbReference type="Gene3D" id="3.40.630.10">
    <property type="entry name" value="Zn peptidases"/>
    <property type="match status" value="1"/>
</dbReference>
<dbReference type="InterPro" id="IPR007246">
    <property type="entry name" value="Gaa1"/>
</dbReference>
<dbReference type="PANTHER" id="PTHR13304">
    <property type="entry name" value="GLYCOSYLPHOSPHATIDYLINOSITOL ANCHOR ATTACHMENT 1 PROTEIN"/>
    <property type="match status" value="1"/>
</dbReference>
<dbReference type="PANTHER" id="PTHR13304:SF0">
    <property type="entry name" value="GLYCOSYLPHOSPHATIDYLINOSITOL ANCHOR ATTACHMENT 1 PROTEIN"/>
    <property type="match status" value="1"/>
</dbReference>
<dbReference type="Pfam" id="PF04114">
    <property type="entry name" value="Gaa1"/>
    <property type="match status" value="1"/>
</dbReference>
<dbReference type="PIRSF" id="PIRSF036762">
    <property type="entry name" value="GAA1"/>
    <property type="match status" value="1"/>
</dbReference>
<comment type="function">
    <text evidence="2 3 4 5 6 7 8">Component of the glycosylphosphatidylinositol-anchor (GPI-anchor) transamidase (GPI-T) complex that catalyzes the formation of the linkage between a proprotein and a GPI-anchor and participates in GPI anchored protein biosynthesis (PubMed:11483512, PubMed:29100095, PubMed:34576938, PubMed:35165458, PubMed:35551457, PubMed:37684232, PubMed:9468317). Binds GPI-anchor (PubMed:37684232).</text>
</comment>
<comment type="pathway">
    <text evidence="2 3 4 5 6 7 8">Glycolipid biosynthesis; glycosylphosphatidylinositol-anchor biosynthesis.</text>
</comment>
<comment type="subunit">
    <text evidence="1 2 4 5 6 7">Heteropentamer (PubMed:35551457). Part of the GPI-anchor transamidase complex, consisting of PIGK, PIGT, PIGS, PIGU and GAA1 (PubMed:11483512, PubMed:34576938, PubMed:35165458, PubMed:35551457, PubMed:37684232). Interacts with PIGK (By similarity).</text>
</comment>
<comment type="interaction">
    <interactant intactId="EBI-720225">
        <id>O43292</id>
    </interactant>
    <interactant intactId="EBI-7134667">
        <id>Q6UVY6</id>
        <label>MOXD1</label>
    </interactant>
    <organismsDiffer>false</organismsDiffer>
    <experiments>3</experiments>
</comment>
<comment type="interaction">
    <interactant intactId="EBI-720225">
        <id>O43292</id>
    </interactant>
    <interactant intactId="EBI-8617711">
        <id>Q92643</id>
        <label>PIGK</label>
    </interactant>
    <organismsDiffer>false</organismsDiffer>
    <experiments>13</experiments>
</comment>
<comment type="interaction">
    <interactant intactId="EBI-720225">
        <id>O43292</id>
    </interactant>
    <interactant intactId="EBI-726383">
        <id>Q969N2</id>
        <label>PIGT</label>
    </interactant>
    <organismsDiffer>false</organismsDiffer>
    <experiments>13</experiments>
</comment>
<comment type="interaction">
    <interactant intactId="EBI-25884370">
        <id>O43292-2</id>
    </interactant>
    <interactant intactId="EBI-399080">
        <id>Q92993</id>
        <label>KAT5</label>
    </interactant>
    <organismsDiffer>false</organismsDiffer>
    <experiments>3</experiments>
</comment>
<comment type="interaction">
    <interactant intactId="EBI-25884370">
        <id>O43292-2</id>
    </interactant>
    <interactant intactId="EBI-11742507">
        <id>Q8TAP4-4</id>
        <label>LMO3</label>
    </interactant>
    <organismsDiffer>false</organismsDiffer>
    <experiments>3</experiments>
</comment>
<comment type="interaction">
    <interactant intactId="EBI-25884370">
        <id>O43292-2</id>
    </interactant>
    <interactant intactId="EBI-359252">
        <id>P23284</id>
        <label>PPIB</label>
    </interactant>
    <organismsDiffer>false</organismsDiffer>
    <experiments>3</experiments>
</comment>
<comment type="interaction">
    <interactant intactId="EBI-25884370">
        <id>O43292-2</id>
    </interactant>
    <interactant intactId="EBI-9090795">
        <id>Q15047-2</id>
        <label>SETDB1</label>
    </interactant>
    <organismsDiffer>false</organismsDiffer>
    <experiments>3</experiments>
</comment>
<comment type="interaction">
    <interactant intactId="EBI-25884370">
        <id>O43292-2</id>
    </interactant>
    <interactant intactId="EBI-359832">
        <id>P61981</id>
        <label>YWHAG</label>
    </interactant>
    <organismsDiffer>false</organismsDiffer>
    <experiments>3</experiments>
</comment>
<comment type="subcellular location">
    <subcellularLocation>
        <location evidence="2 11 12">Endoplasmic reticulum membrane</location>
        <topology evidence="5 6">Multi-pass membrane protein</topology>
    </subcellularLocation>
</comment>
<comment type="alternative products">
    <event type="alternative splicing"/>
    <isoform>
        <id>O43292-1</id>
        <name>1</name>
        <sequence type="displayed"/>
    </isoform>
    <isoform>
        <id>O43292-2</id>
        <name>2</name>
        <sequence type="described" ref="VSP_009542"/>
    </isoform>
</comment>
<comment type="tissue specificity">
    <text evidence="8">Ubiquitously expressed in fetal and adult tissues. Expressed at higher levels in fetal tissues than adult tissues.</text>
</comment>
<comment type="disease" evidence="3">
    <disease id="DI-05160">
        <name>Glycosylphosphatidylinositol biosynthesis defect 15</name>
        <acronym>GPIBD15</acronym>
        <description>An autosomal recessive disorder characterized by delayed psychomotor development, variable intellectual disability, hypotonia, early-onset seizures in most patients, and cerebellar atrophy, resulting in cerebellar signs including gait ataxia and dysarthria.</description>
        <dbReference type="MIM" id="617810"/>
    </disease>
    <text>The disease is caused by variants affecting the gene represented in this entry.</text>
</comment>
<comment type="sequence caution" evidence="10">
    <conflict type="erroneous gene model prediction">
        <sequence resource="EMBL-CDS" id="CAB75660"/>
    </conflict>
    <text>Erroneous prediction from an unspliced cDNA.</text>
</comment>
<organism>
    <name type="scientific">Homo sapiens</name>
    <name type="common">Human</name>
    <dbReference type="NCBI Taxonomy" id="9606"/>
    <lineage>
        <taxon>Eukaryota</taxon>
        <taxon>Metazoa</taxon>
        <taxon>Chordata</taxon>
        <taxon>Craniata</taxon>
        <taxon>Vertebrata</taxon>
        <taxon>Euteleostomi</taxon>
        <taxon>Mammalia</taxon>
        <taxon>Eutheria</taxon>
        <taxon>Euarchontoglires</taxon>
        <taxon>Primates</taxon>
        <taxon>Haplorrhini</taxon>
        <taxon>Catarrhini</taxon>
        <taxon>Hominidae</taxon>
        <taxon>Homo</taxon>
    </lineage>
</organism>
<name>GPAA1_HUMAN</name>
<protein>
    <recommendedName>
        <fullName evidence="10">GPI-anchor transamidase component GPAA1</fullName>
    </recommendedName>
    <alternativeName>
        <fullName>GAA1 protein homolog</fullName>
        <shortName>hGAA1</shortName>
    </alternativeName>
    <alternativeName>
        <fullName>Glycosylphosphatidylinositol anchor attachment 1 protein</fullName>
        <shortName>GPI anchor attachment protein 1</shortName>
    </alternativeName>
</protein>
<proteinExistence type="evidence at protein level"/>